<accession>Q254X9</accession>
<comment type="function">
    <text evidence="1">DNA ligase that catalyzes the formation of phosphodiester linkages between 5'-phosphoryl and 3'-hydroxyl groups in double-stranded DNA using NAD as a coenzyme and as the energy source for the reaction. It is essential for DNA replication and repair of damaged DNA.</text>
</comment>
<comment type="catalytic activity">
    <reaction evidence="1">
        <text>NAD(+) + (deoxyribonucleotide)n-3'-hydroxyl + 5'-phospho-(deoxyribonucleotide)m = (deoxyribonucleotide)n+m + AMP + beta-nicotinamide D-nucleotide.</text>
        <dbReference type="EC" id="6.5.1.2"/>
    </reaction>
</comment>
<comment type="cofactor">
    <cofactor evidence="1">
        <name>Mg(2+)</name>
        <dbReference type="ChEBI" id="CHEBI:18420"/>
    </cofactor>
    <cofactor evidence="1">
        <name>Mn(2+)</name>
        <dbReference type="ChEBI" id="CHEBI:29035"/>
    </cofactor>
</comment>
<comment type="similarity">
    <text evidence="1">Belongs to the NAD-dependent DNA ligase family. LigA subfamily.</text>
</comment>
<evidence type="ECO:0000255" key="1">
    <source>
        <dbReference type="HAMAP-Rule" id="MF_01588"/>
    </source>
</evidence>
<protein>
    <recommendedName>
        <fullName evidence="1">DNA ligase</fullName>
        <ecNumber evidence="1">6.5.1.2</ecNumber>
    </recommendedName>
    <alternativeName>
        <fullName evidence="1">Polydeoxyribonucleotide synthase [NAD(+)]</fullName>
    </alternativeName>
</protein>
<keyword id="KW-0227">DNA damage</keyword>
<keyword id="KW-0234">DNA repair</keyword>
<keyword id="KW-0235">DNA replication</keyword>
<keyword id="KW-0436">Ligase</keyword>
<keyword id="KW-0460">Magnesium</keyword>
<keyword id="KW-0464">Manganese</keyword>
<keyword id="KW-0479">Metal-binding</keyword>
<keyword id="KW-0520">NAD</keyword>
<keyword id="KW-0862">Zinc</keyword>
<dbReference type="EC" id="6.5.1.2" evidence="1"/>
<dbReference type="EMBL" id="AP006861">
    <property type="protein sequence ID" value="BAE81159.1"/>
    <property type="molecule type" value="Genomic_DNA"/>
</dbReference>
<dbReference type="RefSeq" id="WP_011457939.1">
    <property type="nucleotide sequence ID" value="NC_007899.1"/>
</dbReference>
<dbReference type="SMR" id="Q254X9"/>
<dbReference type="STRING" id="264202.CF0387"/>
<dbReference type="KEGG" id="cfe:CF0387"/>
<dbReference type="eggNOG" id="COG0272">
    <property type="taxonomic scope" value="Bacteria"/>
</dbReference>
<dbReference type="HOGENOM" id="CLU_007764_2_1_0"/>
<dbReference type="OrthoDB" id="9759736at2"/>
<dbReference type="Proteomes" id="UP000001260">
    <property type="component" value="Chromosome"/>
</dbReference>
<dbReference type="GO" id="GO:0005829">
    <property type="term" value="C:cytosol"/>
    <property type="evidence" value="ECO:0007669"/>
    <property type="project" value="TreeGrafter"/>
</dbReference>
<dbReference type="GO" id="GO:0003677">
    <property type="term" value="F:DNA binding"/>
    <property type="evidence" value="ECO:0007669"/>
    <property type="project" value="InterPro"/>
</dbReference>
<dbReference type="GO" id="GO:0003911">
    <property type="term" value="F:DNA ligase (NAD+) activity"/>
    <property type="evidence" value="ECO:0007669"/>
    <property type="project" value="UniProtKB-UniRule"/>
</dbReference>
<dbReference type="GO" id="GO:0046872">
    <property type="term" value="F:metal ion binding"/>
    <property type="evidence" value="ECO:0007669"/>
    <property type="project" value="UniProtKB-KW"/>
</dbReference>
<dbReference type="GO" id="GO:0006281">
    <property type="term" value="P:DNA repair"/>
    <property type="evidence" value="ECO:0007669"/>
    <property type="project" value="UniProtKB-KW"/>
</dbReference>
<dbReference type="GO" id="GO:0006260">
    <property type="term" value="P:DNA replication"/>
    <property type="evidence" value="ECO:0007669"/>
    <property type="project" value="UniProtKB-KW"/>
</dbReference>
<dbReference type="CDD" id="cd17748">
    <property type="entry name" value="BRCT_DNA_ligase_like"/>
    <property type="match status" value="1"/>
</dbReference>
<dbReference type="CDD" id="cd00114">
    <property type="entry name" value="LIGANc"/>
    <property type="match status" value="1"/>
</dbReference>
<dbReference type="FunFam" id="1.10.150.20:FF:000006">
    <property type="entry name" value="DNA ligase"/>
    <property type="match status" value="1"/>
</dbReference>
<dbReference type="FunFam" id="2.40.50.140:FF:000012">
    <property type="entry name" value="DNA ligase"/>
    <property type="match status" value="1"/>
</dbReference>
<dbReference type="Gene3D" id="6.20.10.30">
    <property type="match status" value="1"/>
</dbReference>
<dbReference type="Gene3D" id="1.10.150.20">
    <property type="entry name" value="5' to 3' exonuclease, C-terminal subdomain"/>
    <property type="match status" value="2"/>
</dbReference>
<dbReference type="Gene3D" id="3.40.50.10190">
    <property type="entry name" value="BRCT domain"/>
    <property type="match status" value="1"/>
</dbReference>
<dbReference type="Gene3D" id="3.30.470.30">
    <property type="entry name" value="DNA ligase/mRNA capping enzyme"/>
    <property type="match status" value="1"/>
</dbReference>
<dbReference type="Gene3D" id="1.10.287.610">
    <property type="entry name" value="Helix hairpin bin"/>
    <property type="match status" value="1"/>
</dbReference>
<dbReference type="Gene3D" id="2.40.50.140">
    <property type="entry name" value="Nucleic acid-binding proteins"/>
    <property type="match status" value="1"/>
</dbReference>
<dbReference type="HAMAP" id="MF_01588">
    <property type="entry name" value="DNA_ligase_A"/>
    <property type="match status" value="1"/>
</dbReference>
<dbReference type="InterPro" id="IPR001357">
    <property type="entry name" value="BRCT_dom"/>
</dbReference>
<dbReference type="InterPro" id="IPR036420">
    <property type="entry name" value="BRCT_dom_sf"/>
</dbReference>
<dbReference type="InterPro" id="IPR041663">
    <property type="entry name" value="DisA/LigA_HHH"/>
</dbReference>
<dbReference type="InterPro" id="IPR001679">
    <property type="entry name" value="DNA_ligase"/>
</dbReference>
<dbReference type="InterPro" id="IPR018239">
    <property type="entry name" value="DNA_ligase_AS"/>
</dbReference>
<dbReference type="InterPro" id="IPR033136">
    <property type="entry name" value="DNA_ligase_CS"/>
</dbReference>
<dbReference type="InterPro" id="IPR013839">
    <property type="entry name" value="DNAligase_adenylation"/>
</dbReference>
<dbReference type="InterPro" id="IPR013840">
    <property type="entry name" value="DNAligase_N"/>
</dbReference>
<dbReference type="InterPro" id="IPR003583">
    <property type="entry name" value="Hlx-hairpin-Hlx_DNA-bd_motif"/>
</dbReference>
<dbReference type="InterPro" id="IPR012340">
    <property type="entry name" value="NA-bd_OB-fold"/>
</dbReference>
<dbReference type="InterPro" id="IPR004150">
    <property type="entry name" value="NAD_DNA_ligase_OB"/>
</dbReference>
<dbReference type="InterPro" id="IPR010994">
    <property type="entry name" value="RuvA_2-like"/>
</dbReference>
<dbReference type="InterPro" id="IPR004149">
    <property type="entry name" value="Znf_DNAligase_C4"/>
</dbReference>
<dbReference type="NCBIfam" id="TIGR00575">
    <property type="entry name" value="dnlj"/>
    <property type="match status" value="1"/>
</dbReference>
<dbReference type="NCBIfam" id="NF005932">
    <property type="entry name" value="PRK07956.1"/>
    <property type="match status" value="1"/>
</dbReference>
<dbReference type="PANTHER" id="PTHR23389">
    <property type="entry name" value="CHROMOSOME TRANSMISSION FIDELITY FACTOR 18"/>
    <property type="match status" value="1"/>
</dbReference>
<dbReference type="PANTHER" id="PTHR23389:SF9">
    <property type="entry name" value="DNA LIGASE"/>
    <property type="match status" value="1"/>
</dbReference>
<dbReference type="Pfam" id="PF00533">
    <property type="entry name" value="BRCT"/>
    <property type="match status" value="1"/>
</dbReference>
<dbReference type="Pfam" id="PF01653">
    <property type="entry name" value="DNA_ligase_aden"/>
    <property type="match status" value="1"/>
</dbReference>
<dbReference type="Pfam" id="PF03120">
    <property type="entry name" value="DNA_ligase_OB"/>
    <property type="match status" value="1"/>
</dbReference>
<dbReference type="Pfam" id="PF03119">
    <property type="entry name" value="DNA_ligase_ZBD"/>
    <property type="match status" value="1"/>
</dbReference>
<dbReference type="Pfam" id="PF12826">
    <property type="entry name" value="HHH_2"/>
    <property type="match status" value="1"/>
</dbReference>
<dbReference type="PIRSF" id="PIRSF001604">
    <property type="entry name" value="LigA"/>
    <property type="match status" value="1"/>
</dbReference>
<dbReference type="SMART" id="SM00292">
    <property type="entry name" value="BRCT"/>
    <property type="match status" value="1"/>
</dbReference>
<dbReference type="SMART" id="SM00278">
    <property type="entry name" value="HhH1"/>
    <property type="match status" value="3"/>
</dbReference>
<dbReference type="SMART" id="SM00532">
    <property type="entry name" value="LIGANc"/>
    <property type="match status" value="1"/>
</dbReference>
<dbReference type="SUPFAM" id="SSF52113">
    <property type="entry name" value="BRCT domain"/>
    <property type="match status" value="1"/>
</dbReference>
<dbReference type="SUPFAM" id="SSF56091">
    <property type="entry name" value="DNA ligase/mRNA capping enzyme, catalytic domain"/>
    <property type="match status" value="1"/>
</dbReference>
<dbReference type="SUPFAM" id="SSF50249">
    <property type="entry name" value="Nucleic acid-binding proteins"/>
    <property type="match status" value="1"/>
</dbReference>
<dbReference type="SUPFAM" id="SSF47781">
    <property type="entry name" value="RuvA domain 2-like"/>
    <property type="match status" value="1"/>
</dbReference>
<dbReference type="PROSITE" id="PS50172">
    <property type="entry name" value="BRCT"/>
    <property type="match status" value="1"/>
</dbReference>
<dbReference type="PROSITE" id="PS01055">
    <property type="entry name" value="DNA_LIGASE_N1"/>
    <property type="match status" value="1"/>
</dbReference>
<dbReference type="PROSITE" id="PS01056">
    <property type="entry name" value="DNA_LIGASE_N2"/>
    <property type="match status" value="1"/>
</dbReference>
<sequence length="662" mass="74549">MHNMYTREQYLALCKDIEEDDYRYYVLHDPIISDYDYDMKMQKLLSIEAQHPEWRVLWSPSMRLGDRISGSFPVVTHSHPMLSIANAYTLEELNDFFSRVEKTLGYTPTYTLELKIDGIAVAIRYEQRVLVQALSRGNGRQGEDITTNIRTIRSLPLRLPKEAPEFLEVRGEVFFTRATFEQINSIQRQSEKPEFANPRNAAGGTLKLLSAKEAAQRNLELSIYGAWAEENTESHYDNLMLCQKWGFPVFGRPRQYKSVEEVVKALHEIAKIRDQLPMEIDGVVIKVDNTEDQKVLGMTAKHYRWALAYKYAPEQGETILEDILIQVGRTGVLTPVAKLRPVFLSGSKVSRASLYNEEEIERKDIRIGDTVYVEKGGEIIPKVVGVCLEKRPEGTKPWVMPEYCPVCHERVSRESDKVSVRCTNSSCSAGTIEKIRFFVGREALDIEHLGEKVITKLFDLGLIHRRCDIFQITEEDLLQVPGFKDKSIKNVLKSIEKAKSAPLERFIAALGIPYVGIGGANALAQHFLSLDAVMSASLEELKVIDGIGSKVAESIVDYFHQSDNVEEIQKMLSLGVNVLPYSRASASCQGKTFVITGSLEKMTRSEAEASIRNCGGKVGSSVSKSINYLVVGKDPGSKLKKAQELQIPILNESDLLKILYPN</sequence>
<feature type="chain" id="PRO_0000313184" description="DNA ligase">
    <location>
        <begin position="1"/>
        <end position="662"/>
    </location>
</feature>
<feature type="domain" description="BRCT" evidence="1">
    <location>
        <begin position="583"/>
        <end position="662"/>
    </location>
</feature>
<feature type="active site" description="N6-AMP-lysine intermediate" evidence="1">
    <location>
        <position position="115"/>
    </location>
</feature>
<feature type="binding site" evidence="1">
    <location>
        <begin position="34"/>
        <end position="38"/>
    </location>
    <ligand>
        <name>NAD(+)</name>
        <dbReference type="ChEBI" id="CHEBI:57540"/>
    </ligand>
</feature>
<feature type="binding site" evidence="1">
    <location>
        <begin position="83"/>
        <end position="84"/>
    </location>
    <ligand>
        <name>NAD(+)</name>
        <dbReference type="ChEBI" id="CHEBI:57540"/>
    </ligand>
</feature>
<feature type="binding site" evidence="1">
    <location>
        <position position="113"/>
    </location>
    <ligand>
        <name>NAD(+)</name>
        <dbReference type="ChEBI" id="CHEBI:57540"/>
    </ligand>
</feature>
<feature type="binding site" evidence="1">
    <location>
        <position position="136"/>
    </location>
    <ligand>
        <name>NAD(+)</name>
        <dbReference type="ChEBI" id="CHEBI:57540"/>
    </ligand>
</feature>
<feature type="binding site" evidence="1">
    <location>
        <position position="172"/>
    </location>
    <ligand>
        <name>NAD(+)</name>
        <dbReference type="ChEBI" id="CHEBI:57540"/>
    </ligand>
</feature>
<feature type="binding site" evidence="1">
    <location>
        <position position="286"/>
    </location>
    <ligand>
        <name>NAD(+)</name>
        <dbReference type="ChEBI" id="CHEBI:57540"/>
    </ligand>
</feature>
<feature type="binding site" evidence="1">
    <location>
        <position position="310"/>
    </location>
    <ligand>
        <name>NAD(+)</name>
        <dbReference type="ChEBI" id="CHEBI:57540"/>
    </ligand>
</feature>
<feature type="binding site" evidence="1">
    <location>
        <position position="404"/>
    </location>
    <ligand>
        <name>Zn(2+)</name>
        <dbReference type="ChEBI" id="CHEBI:29105"/>
    </ligand>
</feature>
<feature type="binding site" evidence="1">
    <location>
        <position position="407"/>
    </location>
    <ligand>
        <name>Zn(2+)</name>
        <dbReference type="ChEBI" id="CHEBI:29105"/>
    </ligand>
</feature>
<feature type="binding site" evidence="1">
    <location>
        <position position="422"/>
    </location>
    <ligand>
        <name>Zn(2+)</name>
        <dbReference type="ChEBI" id="CHEBI:29105"/>
    </ligand>
</feature>
<feature type="binding site" evidence="1">
    <location>
        <position position="427"/>
    </location>
    <ligand>
        <name>Zn(2+)</name>
        <dbReference type="ChEBI" id="CHEBI:29105"/>
    </ligand>
</feature>
<reference key="1">
    <citation type="journal article" date="2006" name="DNA Res.">
        <title>Genome sequence of the cat pathogen, Chlamydophila felis.</title>
        <authorList>
            <person name="Azuma Y."/>
            <person name="Hirakawa H."/>
            <person name="Yamashita A."/>
            <person name="Cai Y."/>
            <person name="Rahman M.A."/>
            <person name="Suzuki H."/>
            <person name="Mitaku S."/>
            <person name="Toh H."/>
            <person name="Goto S."/>
            <person name="Murakami T."/>
            <person name="Sugi K."/>
            <person name="Hayashi H."/>
            <person name="Fukushi H."/>
            <person name="Hattori M."/>
            <person name="Kuhara S."/>
            <person name="Shirai M."/>
        </authorList>
    </citation>
    <scope>NUCLEOTIDE SEQUENCE [LARGE SCALE GENOMIC DNA]</scope>
    <source>
        <strain>Fe/C-56</strain>
    </source>
</reference>
<gene>
    <name evidence="1" type="primary">ligA</name>
    <name type="ordered locus">CF0387</name>
</gene>
<name>DNLJ_CHLFF</name>
<organism>
    <name type="scientific">Chlamydia felis (strain Fe/C-56)</name>
    <name type="common">Chlamydophila felis</name>
    <dbReference type="NCBI Taxonomy" id="264202"/>
    <lineage>
        <taxon>Bacteria</taxon>
        <taxon>Pseudomonadati</taxon>
        <taxon>Chlamydiota</taxon>
        <taxon>Chlamydiia</taxon>
        <taxon>Chlamydiales</taxon>
        <taxon>Chlamydiaceae</taxon>
        <taxon>Chlamydia/Chlamydophila group</taxon>
        <taxon>Chlamydia</taxon>
    </lineage>
</organism>
<proteinExistence type="inferred from homology"/>